<evidence type="ECO:0000255" key="1">
    <source>
        <dbReference type="HAMAP-Rule" id="MF_01346"/>
    </source>
</evidence>
<accession>A6MVW4</accession>
<name>ATPA_RHDSA</name>
<geneLocation type="chloroplast"/>
<sequence length="502" mass="53593">MVNIRPDEISSIIRQQIDKYDQGVQVANVGTVLQIGDGIARVYGLDQVMAGELLEFEDETIGIALNLESDNVGVVLMGEGRAILEGSSVKATGKIAQVPVGDGYLGRVVNSLGAPIDGKGDISSSDTRLIESAAPGIISRKSVCEPIQTGITAIDSMIPIGRGQRELIIGDRQTGKTSVAIDTIINQKTEDVVCVYVAIGQKAASVASIVTQLEEKGALDYTVIVAANADEPATLQYIAPYTGAAIAEYFMYKGKATLIIYDDLSKQASAYRQMSLLLRRPPGREAFPGDVFYLHSRLLERAAKLSDALGGGSMTALPIIETQAGDVSAYIPTNVISITDGQIFLSGDLFNAGIRPAINVGISVSRVGSAAQIKAMKQVAGKLKLELAQFAELEAFSQFASDLDQATRNQLARGQRLREILKQPASSPISVEEQVAIIYTGINGFLDEVPVNKVKEFVSQLRTNLKNSKPKFAESIRETKALGSDAEELLKSAIADVKQSMG</sequence>
<organism>
    <name type="scientific">Rhodomonas salina</name>
    <name type="common">Cryptomonas salina</name>
    <dbReference type="NCBI Taxonomy" id="52970"/>
    <lineage>
        <taxon>Eukaryota</taxon>
        <taxon>Cryptophyceae</taxon>
        <taxon>Pyrenomonadales</taxon>
        <taxon>Pyrenomonadaceae</taxon>
        <taxon>Rhodomonas</taxon>
    </lineage>
</organism>
<comment type="function">
    <text evidence="1">Produces ATP from ADP in the presence of a proton gradient across the membrane. The alpha chain is a regulatory subunit.</text>
</comment>
<comment type="catalytic activity">
    <reaction evidence="1">
        <text>ATP + H2O + 4 H(+)(in) = ADP + phosphate + 5 H(+)(out)</text>
        <dbReference type="Rhea" id="RHEA:57720"/>
        <dbReference type="ChEBI" id="CHEBI:15377"/>
        <dbReference type="ChEBI" id="CHEBI:15378"/>
        <dbReference type="ChEBI" id="CHEBI:30616"/>
        <dbReference type="ChEBI" id="CHEBI:43474"/>
        <dbReference type="ChEBI" id="CHEBI:456216"/>
        <dbReference type="EC" id="7.1.2.2"/>
    </reaction>
</comment>
<comment type="subunit">
    <text evidence="1">F-type ATPases have 2 components, CF(1) - the catalytic core - and CF(0) - the membrane proton channel. CF(1) has five subunits: alpha(3), beta(3), gamma(1), delta(1), epsilon(1). CF(0) has four main subunits: a, b, b' and c.</text>
</comment>
<comment type="subcellular location">
    <subcellularLocation>
        <location evidence="1">Plastid</location>
        <location evidence="1">Chloroplast thylakoid membrane</location>
        <topology evidence="1">Peripheral membrane protein</topology>
    </subcellularLocation>
</comment>
<comment type="similarity">
    <text evidence="1">Belongs to the ATPase alpha/beta chains family.</text>
</comment>
<dbReference type="EC" id="7.1.2.2" evidence="1"/>
<dbReference type="EMBL" id="EF508371">
    <property type="protein sequence ID" value="ABO70821.1"/>
    <property type="molecule type" value="Genomic_DNA"/>
</dbReference>
<dbReference type="RefSeq" id="YP_001293543.1">
    <property type="nucleotide sequence ID" value="NC_009573.1"/>
</dbReference>
<dbReference type="SMR" id="A6MVW4"/>
<dbReference type="GeneID" id="5228553"/>
<dbReference type="GO" id="GO:0009535">
    <property type="term" value="C:chloroplast thylakoid membrane"/>
    <property type="evidence" value="ECO:0007669"/>
    <property type="project" value="UniProtKB-SubCell"/>
</dbReference>
<dbReference type="GO" id="GO:0045259">
    <property type="term" value="C:proton-transporting ATP synthase complex"/>
    <property type="evidence" value="ECO:0007669"/>
    <property type="project" value="UniProtKB-KW"/>
</dbReference>
<dbReference type="GO" id="GO:0043531">
    <property type="term" value="F:ADP binding"/>
    <property type="evidence" value="ECO:0007669"/>
    <property type="project" value="TreeGrafter"/>
</dbReference>
<dbReference type="GO" id="GO:0005524">
    <property type="term" value="F:ATP binding"/>
    <property type="evidence" value="ECO:0007669"/>
    <property type="project" value="UniProtKB-UniRule"/>
</dbReference>
<dbReference type="GO" id="GO:0046933">
    <property type="term" value="F:proton-transporting ATP synthase activity, rotational mechanism"/>
    <property type="evidence" value="ECO:0007669"/>
    <property type="project" value="UniProtKB-UniRule"/>
</dbReference>
<dbReference type="CDD" id="cd18113">
    <property type="entry name" value="ATP-synt_F1_alpha_C"/>
    <property type="match status" value="1"/>
</dbReference>
<dbReference type="CDD" id="cd18116">
    <property type="entry name" value="ATP-synt_F1_alpha_N"/>
    <property type="match status" value="1"/>
</dbReference>
<dbReference type="CDD" id="cd01132">
    <property type="entry name" value="F1-ATPase_alpha_CD"/>
    <property type="match status" value="1"/>
</dbReference>
<dbReference type="FunFam" id="1.20.150.20:FF:000001">
    <property type="entry name" value="ATP synthase subunit alpha"/>
    <property type="match status" value="1"/>
</dbReference>
<dbReference type="FunFam" id="2.40.30.20:FF:000001">
    <property type="entry name" value="ATP synthase subunit alpha"/>
    <property type="match status" value="1"/>
</dbReference>
<dbReference type="FunFam" id="3.40.50.300:FF:000002">
    <property type="entry name" value="ATP synthase subunit alpha"/>
    <property type="match status" value="1"/>
</dbReference>
<dbReference type="Gene3D" id="2.40.30.20">
    <property type="match status" value="1"/>
</dbReference>
<dbReference type="Gene3D" id="1.20.150.20">
    <property type="entry name" value="ATP synthase alpha/beta chain, C-terminal domain"/>
    <property type="match status" value="1"/>
</dbReference>
<dbReference type="Gene3D" id="3.40.50.300">
    <property type="entry name" value="P-loop containing nucleotide triphosphate hydrolases"/>
    <property type="match status" value="1"/>
</dbReference>
<dbReference type="HAMAP" id="MF_01346">
    <property type="entry name" value="ATP_synth_alpha_bact"/>
    <property type="match status" value="1"/>
</dbReference>
<dbReference type="InterPro" id="IPR023366">
    <property type="entry name" value="ATP_synth_asu-like_sf"/>
</dbReference>
<dbReference type="InterPro" id="IPR000793">
    <property type="entry name" value="ATP_synth_asu_C"/>
</dbReference>
<dbReference type="InterPro" id="IPR038376">
    <property type="entry name" value="ATP_synth_asu_C_sf"/>
</dbReference>
<dbReference type="InterPro" id="IPR033732">
    <property type="entry name" value="ATP_synth_F1_a_nt-bd_dom"/>
</dbReference>
<dbReference type="InterPro" id="IPR005294">
    <property type="entry name" value="ATP_synth_F1_asu"/>
</dbReference>
<dbReference type="InterPro" id="IPR020003">
    <property type="entry name" value="ATPase_a/bsu_AS"/>
</dbReference>
<dbReference type="InterPro" id="IPR004100">
    <property type="entry name" value="ATPase_F1/V1/A1_a/bsu_N"/>
</dbReference>
<dbReference type="InterPro" id="IPR036121">
    <property type="entry name" value="ATPase_F1/V1/A1_a/bsu_N_sf"/>
</dbReference>
<dbReference type="InterPro" id="IPR000194">
    <property type="entry name" value="ATPase_F1/V1/A1_a/bsu_nucl-bd"/>
</dbReference>
<dbReference type="InterPro" id="IPR027417">
    <property type="entry name" value="P-loop_NTPase"/>
</dbReference>
<dbReference type="NCBIfam" id="TIGR00962">
    <property type="entry name" value="atpA"/>
    <property type="match status" value="1"/>
</dbReference>
<dbReference type="NCBIfam" id="NF009884">
    <property type="entry name" value="PRK13343.1"/>
    <property type="match status" value="1"/>
</dbReference>
<dbReference type="PANTHER" id="PTHR48082">
    <property type="entry name" value="ATP SYNTHASE SUBUNIT ALPHA, MITOCHONDRIAL"/>
    <property type="match status" value="1"/>
</dbReference>
<dbReference type="PANTHER" id="PTHR48082:SF2">
    <property type="entry name" value="ATP SYNTHASE SUBUNIT ALPHA, MITOCHONDRIAL"/>
    <property type="match status" value="1"/>
</dbReference>
<dbReference type="Pfam" id="PF00006">
    <property type="entry name" value="ATP-synt_ab"/>
    <property type="match status" value="1"/>
</dbReference>
<dbReference type="Pfam" id="PF00306">
    <property type="entry name" value="ATP-synt_ab_C"/>
    <property type="match status" value="1"/>
</dbReference>
<dbReference type="Pfam" id="PF02874">
    <property type="entry name" value="ATP-synt_ab_N"/>
    <property type="match status" value="1"/>
</dbReference>
<dbReference type="PIRSF" id="PIRSF039088">
    <property type="entry name" value="F_ATPase_subunit_alpha"/>
    <property type="match status" value="1"/>
</dbReference>
<dbReference type="SUPFAM" id="SSF47917">
    <property type="entry name" value="C-terminal domain of alpha and beta subunits of F1 ATP synthase"/>
    <property type="match status" value="1"/>
</dbReference>
<dbReference type="SUPFAM" id="SSF50615">
    <property type="entry name" value="N-terminal domain of alpha and beta subunits of F1 ATP synthase"/>
    <property type="match status" value="1"/>
</dbReference>
<dbReference type="SUPFAM" id="SSF52540">
    <property type="entry name" value="P-loop containing nucleoside triphosphate hydrolases"/>
    <property type="match status" value="1"/>
</dbReference>
<dbReference type="PROSITE" id="PS00152">
    <property type="entry name" value="ATPASE_ALPHA_BETA"/>
    <property type="match status" value="1"/>
</dbReference>
<feature type="chain" id="PRO_0000339109" description="ATP synthase subunit alpha, chloroplastic">
    <location>
        <begin position="1"/>
        <end position="502"/>
    </location>
</feature>
<feature type="binding site" evidence="1">
    <location>
        <begin position="170"/>
        <end position="177"/>
    </location>
    <ligand>
        <name>ATP</name>
        <dbReference type="ChEBI" id="CHEBI:30616"/>
    </ligand>
</feature>
<feature type="site" description="Required for activity" evidence="1">
    <location>
        <position position="363"/>
    </location>
</feature>
<keyword id="KW-0066">ATP synthesis</keyword>
<keyword id="KW-0067">ATP-binding</keyword>
<keyword id="KW-0139">CF(1)</keyword>
<keyword id="KW-0150">Chloroplast</keyword>
<keyword id="KW-0375">Hydrogen ion transport</keyword>
<keyword id="KW-0406">Ion transport</keyword>
<keyword id="KW-0472">Membrane</keyword>
<keyword id="KW-0547">Nucleotide-binding</keyword>
<keyword id="KW-0934">Plastid</keyword>
<keyword id="KW-0793">Thylakoid</keyword>
<keyword id="KW-1278">Translocase</keyword>
<keyword id="KW-0813">Transport</keyword>
<protein>
    <recommendedName>
        <fullName evidence="1">ATP synthase subunit alpha, chloroplastic</fullName>
        <ecNumber evidence="1">7.1.2.2</ecNumber>
    </recommendedName>
    <alternativeName>
        <fullName evidence="1">ATP synthase F1 sector subunit alpha</fullName>
    </alternativeName>
    <alternativeName>
        <fullName evidence="1">F-ATPase subunit alpha</fullName>
    </alternativeName>
</protein>
<reference key="1">
    <citation type="journal article" date="2007" name="Mol. Biol. Evol.">
        <title>Plastid genome sequence of the cryptophyte alga Rhodomonas salina CCMP1319: lateral transfer of putative DNA replication machinery and a test of chromist plastid phylogeny.</title>
        <authorList>
            <person name="Khan H."/>
            <person name="Parks N."/>
            <person name="Kozera C."/>
            <person name="Curtis B.A."/>
            <person name="Parsons B.J."/>
            <person name="Bowman S."/>
            <person name="Archibald J.M."/>
        </authorList>
    </citation>
    <scope>NUCLEOTIDE SEQUENCE [LARGE SCALE GENOMIC DNA]</scope>
    <source>
        <strain>CCMP1319 / NEPCC76 / CS-174</strain>
    </source>
</reference>
<gene>
    <name evidence="1" type="primary">atpA</name>
</gene>
<proteinExistence type="inferred from homology"/>